<evidence type="ECO:0000255" key="1"/>
<evidence type="ECO:0000305" key="2"/>
<comment type="subcellular location">
    <subcellularLocation>
        <location evidence="2">Cell membrane</location>
        <topology evidence="2">Multi-pass membrane protein</topology>
    </subcellularLocation>
</comment>
<gene>
    <name type="ordered locus">MJ0110</name>
</gene>
<reference key="1">
    <citation type="journal article" date="1996" name="Science">
        <title>Complete genome sequence of the methanogenic archaeon, Methanococcus jannaschii.</title>
        <authorList>
            <person name="Bult C.J."/>
            <person name="White O."/>
            <person name="Olsen G.J."/>
            <person name="Zhou L."/>
            <person name="Fleischmann R.D."/>
            <person name="Sutton G.G."/>
            <person name="Blake J.A."/>
            <person name="FitzGerald L.M."/>
            <person name="Clayton R.A."/>
            <person name="Gocayne J.D."/>
            <person name="Kerlavage A.R."/>
            <person name="Dougherty B.A."/>
            <person name="Tomb J.-F."/>
            <person name="Adams M.D."/>
            <person name="Reich C.I."/>
            <person name="Overbeek R."/>
            <person name="Kirkness E.F."/>
            <person name="Weinstock K.G."/>
            <person name="Merrick J.M."/>
            <person name="Glodek A."/>
            <person name="Scott J.L."/>
            <person name="Geoghagen N.S.M."/>
            <person name="Weidman J.F."/>
            <person name="Fuhrmann J.L."/>
            <person name="Nguyen D."/>
            <person name="Utterback T.R."/>
            <person name="Kelley J.M."/>
            <person name="Peterson J.D."/>
            <person name="Sadow P.W."/>
            <person name="Hanna M.C."/>
            <person name="Cotton M.D."/>
            <person name="Roberts K.M."/>
            <person name="Hurst M.A."/>
            <person name="Kaine B.P."/>
            <person name="Borodovsky M."/>
            <person name="Klenk H.-P."/>
            <person name="Fraser C.M."/>
            <person name="Smith H.O."/>
            <person name="Woese C.R."/>
            <person name="Venter J.C."/>
        </authorList>
    </citation>
    <scope>NUCLEOTIDE SEQUENCE [LARGE SCALE GENOMIC DNA]</scope>
    <source>
        <strain>ATCC 43067 / DSM 2661 / JAL-1 / JCM 10045 / NBRC 100440</strain>
    </source>
</reference>
<dbReference type="EMBL" id="L77117">
    <property type="protein sequence ID" value="AAB98095.1"/>
    <property type="molecule type" value="Genomic_DNA"/>
</dbReference>
<dbReference type="PIR" id="F64313">
    <property type="entry name" value="F64313"/>
</dbReference>
<dbReference type="SMR" id="Q57574"/>
<dbReference type="STRING" id="243232.MJ_0110"/>
<dbReference type="TCDB" id="2.A.123.2.5">
    <property type="family name" value="the sweet, pq-loop, saliva, mtn3 (sweet) family"/>
</dbReference>
<dbReference type="PaxDb" id="243232-MJ_0110"/>
<dbReference type="EnsemblBacteria" id="AAB98095">
    <property type="protein sequence ID" value="AAB98095"/>
    <property type="gene ID" value="MJ_0110"/>
</dbReference>
<dbReference type="KEGG" id="mja:MJ_0110"/>
<dbReference type="eggNOG" id="arCOG05022">
    <property type="taxonomic scope" value="Archaea"/>
</dbReference>
<dbReference type="HOGENOM" id="CLU_135915_2_1_2"/>
<dbReference type="InParanoid" id="Q57574"/>
<dbReference type="PhylomeDB" id="Q57574"/>
<dbReference type="Proteomes" id="UP000000805">
    <property type="component" value="Chromosome"/>
</dbReference>
<dbReference type="GO" id="GO:0005886">
    <property type="term" value="C:plasma membrane"/>
    <property type="evidence" value="ECO:0007669"/>
    <property type="project" value="UniProtKB-SubCell"/>
</dbReference>
<dbReference type="GO" id="GO:0051119">
    <property type="term" value="F:sugar transmembrane transporter activity"/>
    <property type="evidence" value="ECO:0007669"/>
    <property type="project" value="InterPro"/>
</dbReference>
<dbReference type="Gene3D" id="1.20.1280.290">
    <property type="match status" value="1"/>
</dbReference>
<dbReference type="InterPro" id="IPR006603">
    <property type="entry name" value="PQ-loop_rpt"/>
</dbReference>
<dbReference type="InterPro" id="IPR047662">
    <property type="entry name" value="SemiSWEET"/>
</dbReference>
<dbReference type="NCBIfam" id="NF037968">
    <property type="entry name" value="SemiSWEET_2"/>
    <property type="match status" value="1"/>
</dbReference>
<dbReference type="Pfam" id="PF04193">
    <property type="entry name" value="PQ-loop"/>
    <property type="match status" value="1"/>
</dbReference>
<name>Y110_METJA</name>
<sequence>MVINMDFDITVIGYIAGTLTTFASLPQLIKSLKEKDMSNISLAFVITFTTGLTLWLIYGILRNDYPIIVFNILSLMFWIPITYLKIRDEMRKS</sequence>
<organism>
    <name type="scientific">Methanocaldococcus jannaschii (strain ATCC 43067 / DSM 2661 / JAL-1 / JCM 10045 / NBRC 100440)</name>
    <name type="common">Methanococcus jannaschii</name>
    <dbReference type="NCBI Taxonomy" id="243232"/>
    <lineage>
        <taxon>Archaea</taxon>
        <taxon>Methanobacteriati</taxon>
        <taxon>Methanobacteriota</taxon>
        <taxon>Methanomada group</taxon>
        <taxon>Methanococci</taxon>
        <taxon>Methanococcales</taxon>
        <taxon>Methanocaldococcaceae</taxon>
        <taxon>Methanocaldococcus</taxon>
    </lineage>
</organism>
<proteinExistence type="predicted"/>
<protein>
    <recommendedName>
        <fullName>Uncharacterized protein MJ0110</fullName>
    </recommendedName>
</protein>
<accession>Q57574</accession>
<keyword id="KW-1003">Cell membrane</keyword>
<keyword id="KW-0472">Membrane</keyword>
<keyword id="KW-1185">Reference proteome</keyword>
<keyword id="KW-0812">Transmembrane</keyword>
<keyword id="KW-1133">Transmembrane helix</keyword>
<feature type="chain" id="PRO_0000106697" description="Uncharacterized protein MJ0110">
    <location>
        <begin position="1"/>
        <end position="93"/>
    </location>
</feature>
<feature type="transmembrane region" description="Helical" evidence="1">
    <location>
        <begin position="9"/>
        <end position="29"/>
    </location>
</feature>
<feature type="transmembrane region" description="Helical" evidence="1">
    <location>
        <begin position="40"/>
        <end position="60"/>
    </location>
</feature>
<feature type="transmembrane region" description="Helical" evidence="1">
    <location>
        <begin position="66"/>
        <end position="86"/>
    </location>
</feature>